<reference key="1">
    <citation type="journal article" date="2000" name="Nature">
        <title>The genome sequence of the thermoacidophilic scavenger Thermoplasma acidophilum.</title>
        <authorList>
            <person name="Ruepp A."/>
            <person name="Graml W."/>
            <person name="Santos-Martinez M.-L."/>
            <person name="Koretke K.K."/>
            <person name="Volker C."/>
            <person name="Mewes H.-W."/>
            <person name="Frishman D."/>
            <person name="Stocker S."/>
            <person name="Lupas A.N."/>
            <person name="Baumeister W."/>
        </authorList>
    </citation>
    <scope>NUCLEOTIDE SEQUENCE [LARGE SCALE GENOMIC DNA]</scope>
    <source>
        <strain>ATCC 25905 / DSM 1728 / JCM 9062 / NBRC 15155 / AMRC-C165</strain>
    </source>
</reference>
<keyword id="KW-0067">ATP-binding</keyword>
<keyword id="KW-0963">Cytoplasm</keyword>
<keyword id="KW-1015">Disulfide bond</keyword>
<keyword id="KW-0547">Nucleotide-binding</keyword>
<keyword id="KW-0676">Redox-active center</keyword>
<keyword id="KW-1185">Reference proteome</keyword>
<keyword id="KW-0694">RNA-binding</keyword>
<keyword id="KW-0784">Thiamine biosynthesis</keyword>
<keyword id="KW-0808">Transferase</keyword>
<keyword id="KW-0820">tRNA-binding</keyword>
<evidence type="ECO:0000255" key="1">
    <source>
        <dbReference type="HAMAP-Rule" id="MF_00021"/>
    </source>
</evidence>
<evidence type="ECO:0000305" key="2"/>
<name>THII_THEAC</name>
<gene>
    <name evidence="1" type="primary">thiI</name>
    <name type="ordered locus">Ta0506</name>
</gene>
<feature type="chain" id="PRO_0000154902" description="tRNA sulfurtransferase">
    <location>
        <begin position="1"/>
        <end position="481"/>
    </location>
</feature>
<feature type="domain" description="THUMP" evidence="1">
    <location>
        <begin position="54"/>
        <end position="156"/>
    </location>
</feature>
<feature type="domain" description="Rhodanese" evidence="1">
    <location>
        <begin position="388"/>
        <end position="463"/>
    </location>
</feature>
<feature type="active site" description="Cysteine persulfide intermediate" evidence="1">
    <location>
        <position position="433"/>
    </location>
</feature>
<feature type="binding site" evidence="1">
    <location>
        <begin position="174"/>
        <end position="175"/>
    </location>
    <ligand>
        <name>ATP</name>
        <dbReference type="ChEBI" id="CHEBI:30616"/>
    </ligand>
</feature>
<feature type="binding site" evidence="1">
    <location>
        <position position="256"/>
    </location>
    <ligand>
        <name>ATP</name>
        <dbReference type="ChEBI" id="CHEBI:30616"/>
    </ligand>
</feature>
<feature type="binding site" evidence="1">
    <location>
        <position position="278"/>
    </location>
    <ligand>
        <name>ATP</name>
        <dbReference type="ChEBI" id="CHEBI:30616"/>
    </ligand>
</feature>
<feature type="binding site" evidence="1">
    <location>
        <position position="287"/>
    </location>
    <ligand>
        <name>ATP</name>
        <dbReference type="ChEBI" id="CHEBI:30616"/>
    </ligand>
</feature>
<feature type="disulfide bond" description="Redox-active" evidence="1">
    <location>
        <begin position="334"/>
        <end position="433"/>
    </location>
</feature>
<dbReference type="EC" id="2.8.1.4" evidence="1"/>
<dbReference type="EMBL" id="AL445064">
    <property type="protein sequence ID" value="CAC11646.1"/>
    <property type="status" value="ALT_INIT"/>
    <property type="molecule type" value="Genomic_DNA"/>
</dbReference>
<dbReference type="RefSeq" id="WP_010900931.1">
    <property type="nucleotide sequence ID" value="NC_002578.1"/>
</dbReference>
<dbReference type="SMR" id="Q9HKT9"/>
<dbReference type="FunCoup" id="Q9HKT9">
    <property type="interactions" value="59"/>
</dbReference>
<dbReference type="STRING" id="273075.gene:9571724"/>
<dbReference type="PaxDb" id="273075-Ta0506m"/>
<dbReference type="EnsemblBacteria" id="CAC11646">
    <property type="protein sequence ID" value="CAC11646"/>
    <property type="gene ID" value="CAC11646"/>
</dbReference>
<dbReference type="KEGG" id="tac:Ta0506"/>
<dbReference type="eggNOG" id="arCOG00038">
    <property type="taxonomic scope" value="Archaea"/>
</dbReference>
<dbReference type="eggNOG" id="arCOG02021">
    <property type="taxonomic scope" value="Archaea"/>
</dbReference>
<dbReference type="HOGENOM" id="CLU_037952_4_1_2"/>
<dbReference type="InParanoid" id="Q9HKT9"/>
<dbReference type="OrthoDB" id="372227at2157"/>
<dbReference type="UniPathway" id="UPA00060"/>
<dbReference type="Proteomes" id="UP000001024">
    <property type="component" value="Chromosome"/>
</dbReference>
<dbReference type="GO" id="GO:0005829">
    <property type="term" value="C:cytosol"/>
    <property type="evidence" value="ECO:0007669"/>
    <property type="project" value="TreeGrafter"/>
</dbReference>
<dbReference type="GO" id="GO:0005524">
    <property type="term" value="F:ATP binding"/>
    <property type="evidence" value="ECO:0007669"/>
    <property type="project" value="UniProtKB-UniRule"/>
</dbReference>
<dbReference type="GO" id="GO:0004810">
    <property type="term" value="F:CCA tRNA nucleotidyltransferase activity"/>
    <property type="evidence" value="ECO:0007669"/>
    <property type="project" value="InterPro"/>
</dbReference>
<dbReference type="GO" id="GO:0000049">
    <property type="term" value="F:tRNA binding"/>
    <property type="evidence" value="ECO:0007669"/>
    <property type="project" value="UniProtKB-UniRule"/>
</dbReference>
<dbReference type="GO" id="GO:0140741">
    <property type="term" value="F:tRNA-uracil-4 sulfurtransferase activity"/>
    <property type="evidence" value="ECO:0007669"/>
    <property type="project" value="UniProtKB-EC"/>
</dbReference>
<dbReference type="GO" id="GO:0009228">
    <property type="term" value="P:thiamine biosynthetic process"/>
    <property type="evidence" value="ECO:0007669"/>
    <property type="project" value="UniProtKB-KW"/>
</dbReference>
<dbReference type="GO" id="GO:0009229">
    <property type="term" value="P:thiamine diphosphate biosynthetic process"/>
    <property type="evidence" value="ECO:0007669"/>
    <property type="project" value="UniProtKB-UniRule"/>
</dbReference>
<dbReference type="GO" id="GO:0052837">
    <property type="term" value="P:thiazole biosynthetic process"/>
    <property type="evidence" value="ECO:0007669"/>
    <property type="project" value="TreeGrafter"/>
</dbReference>
<dbReference type="GO" id="GO:0002937">
    <property type="term" value="P:tRNA 4-thiouridine biosynthesis"/>
    <property type="evidence" value="ECO:0007669"/>
    <property type="project" value="TreeGrafter"/>
</dbReference>
<dbReference type="CDD" id="cd01712">
    <property type="entry name" value="PPase_ThiI"/>
    <property type="match status" value="1"/>
</dbReference>
<dbReference type="CDD" id="cd00158">
    <property type="entry name" value="RHOD"/>
    <property type="match status" value="1"/>
</dbReference>
<dbReference type="CDD" id="cd11716">
    <property type="entry name" value="THUMP_ThiI"/>
    <property type="match status" value="1"/>
</dbReference>
<dbReference type="Gene3D" id="3.30.2130.30">
    <property type="match status" value="1"/>
</dbReference>
<dbReference type="Gene3D" id="3.40.50.620">
    <property type="entry name" value="HUPs"/>
    <property type="match status" value="1"/>
</dbReference>
<dbReference type="Gene3D" id="3.40.250.10">
    <property type="entry name" value="Rhodanese-like domain"/>
    <property type="match status" value="1"/>
</dbReference>
<dbReference type="HAMAP" id="MF_00021">
    <property type="entry name" value="ThiI"/>
    <property type="match status" value="1"/>
</dbReference>
<dbReference type="InterPro" id="IPR001763">
    <property type="entry name" value="Rhodanese-like_dom"/>
</dbReference>
<dbReference type="InterPro" id="IPR036873">
    <property type="entry name" value="Rhodanese-like_dom_sf"/>
</dbReference>
<dbReference type="InterPro" id="IPR014729">
    <property type="entry name" value="Rossmann-like_a/b/a_fold"/>
</dbReference>
<dbReference type="InterPro" id="IPR020536">
    <property type="entry name" value="ThiI_AANH"/>
</dbReference>
<dbReference type="InterPro" id="IPR054173">
    <property type="entry name" value="ThiI_fer"/>
</dbReference>
<dbReference type="InterPro" id="IPR004114">
    <property type="entry name" value="THUMP_dom"/>
</dbReference>
<dbReference type="InterPro" id="IPR049962">
    <property type="entry name" value="THUMP_ThiI"/>
</dbReference>
<dbReference type="InterPro" id="IPR003720">
    <property type="entry name" value="tRNA_STrfase"/>
</dbReference>
<dbReference type="InterPro" id="IPR050102">
    <property type="entry name" value="tRNA_sulfurtransferase_ThiI"/>
</dbReference>
<dbReference type="PANTHER" id="PTHR43209">
    <property type="entry name" value="TRNA SULFURTRANSFERASE"/>
    <property type="match status" value="1"/>
</dbReference>
<dbReference type="PANTHER" id="PTHR43209:SF1">
    <property type="entry name" value="TRNA SULFURTRANSFERASE"/>
    <property type="match status" value="1"/>
</dbReference>
<dbReference type="Pfam" id="PF00581">
    <property type="entry name" value="Rhodanese"/>
    <property type="match status" value="1"/>
</dbReference>
<dbReference type="Pfam" id="PF02568">
    <property type="entry name" value="ThiI"/>
    <property type="match status" value="1"/>
</dbReference>
<dbReference type="Pfam" id="PF22025">
    <property type="entry name" value="ThiI_fer"/>
    <property type="match status" value="1"/>
</dbReference>
<dbReference type="Pfam" id="PF02926">
    <property type="entry name" value="THUMP"/>
    <property type="match status" value="1"/>
</dbReference>
<dbReference type="SMART" id="SM00450">
    <property type="entry name" value="RHOD"/>
    <property type="match status" value="1"/>
</dbReference>
<dbReference type="SMART" id="SM00981">
    <property type="entry name" value="THUMP"/>
    <property type="match status" value="1"/>
</dbReference>
<dbReference type="SUPFAM" id="SSF52402">
    <property type="entry name" value="Adenine nucleotide alpha hydrolases-like"/>
    <property type="match status" value="1"/>
</dbReference>
<dbReference type="SUPFAM" id="SSF52821">
    <property type="entry name" value="Rhodanese/Cell cycle control phosphatase"/>
    <property type="match status" value="1"/>
</dbReference>
<dbReference type="SUPFAM" id="SSF143437">
    <property type="entry name" value="THUMP domain-like"/>
    <property type="match status" value="1"/>
</dbReference>
<dbReference type="PROSITE" id="PS50206">
    <property type="entry name" value="RHODANESE_3"/>
    <property type="match status" value="1"/>
</dbReference>
<dbReference type="PROSITE" id="PS51165">
    <property type="entry name" value="THUMP"/>
    <property type="match status" value="1"/>
</dbReference>
<accession>Q9HKT9</accession>
<protein>
    <recommendedName>
        <fullName evidence="1">tRNA sulfurtransferase</fullName>
        <ecNumber evidence="1">2.8.1.4</ecNumber>
    </recommendedName>
    <alternativeName>
        <fullName evidence="1">Sulfur carrier protein ThiS sulfurtransferase</fullName>
    </alternativeName>
    <alternativeName>
        <fullName evidence="1">Thiamine biosynthesis protein ThiI</fullName>
    </alternativeName>
    <alternativeName>
        <fullName evidence="1">tRNA 4-thiouridine synthase</fullName>
    </alternativeName>
</protein>
<sequence>MSLYMVRYSEIGLKGDRERSRMESILMDNIRKYYEIIGLRASCRIMSGHVLVEADGDGPLRHIMGIKSYSPVLRFRAETLEDITRIASEIYREKVRGKTFGVRCNRTGTHSFTSLDVERAIGDSLYDASAGVNLKNPDIWIHADIVGKDVFFYHEIIPGPGGLPLGSEGKYISLVSGGIDSPVSTWMIMKRGSPCDILFCSLSYPVDLRPFVDVVKKLVERWAPYRKPRIYVADCRSLIRTMVIEGRTKYSNVTFKRVIYRIAEKIALENGYNGIVTGESLGQVSSQTAENLKAIESGIGVPILRPLIGMDKDEVVDMARRIGTFPELSMGEFCSLFASRPIIRSKPEDIDEDMKQIDMEELFEGIRAYDIDDLSVALRTDLSLKGSIPKDAVIIDLRSRSQYEKDHIPNSINLPLGDAINVEDKGRTYVVYCGMGLQSAYVASMLRNRGITAYYSTFSDLKKRLSEKESGNITGIDQPAE</sequence>
<organism>
    <name type="scientific">Thermoplasma acidophilum (strain ATCC 25905 / DSM 1728 / JCM 9062 / NBRC 15155 / AMRC-C165)</name>
    <dbReference type="NCBI Taxonomy" id="273075"/>
    <lineage>
        <taxon>Archaea</taxon>
        <taxon>Methanobacteriati</taxon>
        <taxon>Thermoplasmatota</taxon>
        <taxon>Thermoplasmata</taxon>
        <taxon>Thermoplasmatales</taxon>
        <taxon>Thermoplasmataceae</taxon>
        <taxon>Thermoplasma</taxon>
    </lineage>
</organism>
<proteinExistence type="inferred from homology"/>
<comment type="function">
    <text evidence="1">Catalyzes the ATP-dependent transfer of a sulfur to tRNA to produce 4-thiouridine in position 8 of tRNAs, which functions as a near-UV photosensor. Also catalyzes the transfer of sulfur to the sulfur carrier protein ThiS, forming ThiS-thiocarboxylate. This is a step in the synthesis of thiazole, in the thiamine biosynthesis pathway. The sulfur is donated as persulfide by IscS.</text>
</comment>
<comment type="catalytic activity">
    <reaction evidence="1">
        <text>[ThiI sulfur-carrier protein]-S-sulfanyl-L-cysteine + a uridine in tRNA + 2 reduced [2Fe-2S]-[ferredoxin] + ATP + H(+) = [ThiI sulfur-carrier protein]-L-cysteine + a 4-thiouridine in tRNA + 2 oxidized [2Fe-2S]-[ferredoxin] + AMP + diphosphate</text>
        <dbReference type="Rhea" id="RHEA:24176"/>
        <dbReference type="Rhea" id="RHEA-COMP:10000"/>
        <dbReference type="Rhea" id="RHEA-COMP:10001"/>
        <dbReference type="Rhea" id="RHEA-COMP:13337"/>
        <dbReference type="Rhea" id="RHEA-COMP:13338"/>
        <dbReference type="Rhea" id="RHEA-COMP:13339"/>
        <dbReference type="Rhea" id="RHEA-COMP:13340"/>
        <dbReference type="ChEBI" id="CHEBI:15378"/>
        <dbReference type="ChEBI" id="CHEBI:29950"/>
        <dbReference type="ChEBI" id="CHEBI:30616"/>
        <dbReference type="ChEBI" id="CHEBI:33019"/>
        <dbReference type="ChEBI" id="CHEBI:33737"/>
        <dbReference type="ChEBI" id="CHEBI:33738"/>
        <dbReference type="ChEBI" id="CHEBI:61963"/>
        <dbReference type="ChEBI" id="CHEBI:65315"/>
        <dbReference type="ChEBI" id="CHEBI:136798"/>
        <dbReference type="ChEBI" id="CHEBI:456215"/>
        <dbReference type="EC" id="2.8.1.4"/>
    </reaction>
</comment>
<comment type="catalytic activity">
    <reaction evidence="1">
        <text>[ThiS sulfur-carrier protein]-C-terminal Gly-Gly-AMP + S-sulfanyl-L-cysteinyl-[cysteine desulfurase] + AH2 = [ThiS sulfur-carrier protein]-C-terminal-Gly-aminoethanethioate + L-cysteinyl-[cysteine desulfurase] + A + AMP + 2 H(+)</text>
        <dbReference type="Rhea" id="RHEA:43340"/>
        <dbReference type="Rhea" id="RHEA-COMP:12157"/>
        <dbReference type="Rhea" id="RHEA-COMP:12158"/>
        <dbReference type="Rhea" id="RHEA-COMP:12910"/>
        <dbReference type="Rhea" id="RHEA-COMP:19908"/>
        <dbReference type="ChEBI" id="CHEBI:13193"/>
        <dbReference type="ChEBI" id="CHEBI:15378"/>
        <dbReference type="ChEBI" id="CHEBI:17499"/>
        <dbReference type="ChEBI" id="CHEBI:29950"/>
        <dbReference type="ChEBI" id="CHEBI:61963"/>
        <dbReference type="ChEBI" id="CHEBI:90618"/>
        <dbReference type="ChEBI" id="CHEBI:232372"/>
        <dbReference type="ChEBI" id="CHEBI:456215"/>
    </reaction>
</comment>
<comment type="pathway">
    <text evidence="1">Cofactor biosynthesis; thiamine diphosphate biosynthesis.</text>
</comment>
<comment type="subcellular location">
    <subcellularLocation>
        <location evidence="1">Cytoplasm</location>
    </subcellularLocation>
</comment>
<comment type="similarity">
    <text evidence="1">Belongs to the ThiI family.</text>
</comment>
<comment type="sequence caution" evidence="2">
    <conflict type="erroneous initiation">
        <sequence resource="EMBL-CDS" id="CAC11646"/>
    </conflict>
</comment>